<reference key="1">
    <citation type="journal article" date="2006" name="BMC Genomics">
        <title>Complete genome sequence of Shigella flexneri 5b and comparison with Shigella flexneri 2a.</title>
        <authorList>
            <person name="Nie H."/>
            <person name="Yang F."/>
            <person name="Zhang X."/>
            <person name="Yang J."/>
            <person name="Chen L."/>
            <person name="Wang J."/>
            <person name="Xiong Z."/>
            <person name="Peng J."/>
            <person name="Sun L."/>
            <person name="Dong J."/>
            <person name="Xue Y."/>
            <person name="Xu X."/>
            <person name="Chen S."/>
            <person name="Yao Z."/>
            <person name="Shen Y."/>
            <person name="Jin Q."/>
        </authorList>
    </citation>
    <scope>NUCLEOTIDE SEQUENCE [LARGE SCALE GENOMIC DNA]</scope>
    <source>
        <strain>8401</strain>
    </source>
</reference>
<dbReference type="EC" id="1.1.1.282" evidence="1"/>
<dbReference type="EMBL" id="CP000266">
    <property type="protein sequence ID" value="ABF03886.1"/>
    <property type="molecule type" value="Genomic_DNA"/>
</dbReference>
<dbReference type="SMR" id="Q0T479"/>
<dbReference type="KEGG" id="sfv:SFV_1718"/>
<dbReference type="HOGENOM" id="CLU_044063_4_4_6"/>
<dbReference type="UniPathway" id="UPA00053">
    <property type="reaction ID" value="UER00087"/>
</dbReference>
<dbReference type="Proteomes" id="UP000000659">
    <property type="component" value="Chromosome"/>
</dbReference>
<dbReference type="GO" id="GO:0030266">
    <property type="term" value="F:quinate 3-dehydrogenase (NAD+) activity"/>
    <property type="evidence" value="ECO:0007669"/>
    <property type="project" value="UniProtKB-UniRule"/>
</dbReference>
<dbReference type="GO" id="GO:0052733">
    <property type="term" value="F:quinate 3-dehydrogenase (NADP+) activity"/>
    <property type="evidence" value="ECO:0007669"/>
    <property type="project" value="InterPro"/>
</dbReference>
<dbReference type="GO" id="GO:0052734">
    <property type="term" value="F:shikimate 3-dehydrogenase (NAD+) activity"/>
    <property type="evidence" value="ECO:0007669"/>
    <property type="project" value="InterPro"/>
</dbReference>
<dbReference type="GO" id="GO:0004764">
    <property type="term" value="F:shikimate 3-dehydrogenase (NADP+) activity"/>
    <property type="evidence" value="ECO:0007669"/>
    <property type="project" value="UniProtKB-UniRule"/>
</dbReference>
<dbReference type="GO" id="GO:0008652">
    <property type="term" value="P:amino acid biosynthetic process"/>
    <property type="evidence" value="ECO:0007669"/>
    <property type="project" value="UniProtKB-KW"/>
</dbReference>
<dbReference type="GO" id="GO:0009073">
    <property type="term" value="P:aromatic amino acid family biosynthetic process"/>
    <property type="evidence" value="ECO:0007669"/>
    <property type="project" value="UniProtKB-KW"/>
</dbReference>
<dbReference type="GO" id="GO:0009423">
    <property type="term" value="P:chorismate biosynthetic process"/>
    <property type="evidence" value="ECO:0007669"/>
    <property type="project" value="UniProtKB-UniRule"/>
</dbReference>
<dbReference type="GO" id="GO:0019632">
    <property type="term" value="P:shikimate metabolic process"/>
    <property type="evidence" value="ECO:0007669"/>
    <property type="project" value="TreeGrafter"/>
</dbReference>
<dbReference type="CDD" id="cd01065">
    <property type="entry name" value="NAD_bind_Shikimate_DH"/>
    <property type="match status" value="1"/>
</dbReference>
<dbReference type="FunFam" id="3.40.50.720:FF:000086">
    <property type="entry name" value="Quinate/shikimate dehydrogenase"/>
    <property type="match status" value="1"/>
</dbReference>
<dbReference type="Gene3D" id="3.40.50.10860">
    <property type="entry name" value="Leucine Dehydrogenase, chain A, domain 1"/>
    <property type="match status" value="1"/>
</dbReference>
<dbReference type="Gene3D" id="3.40.50.720">
    <property type="entry name" value="NAD(P)-binding Rossmann-like Domain"/>
    <property type="match status" value="1"/>
</dbReference>
<dbReference type="HAMAP" id="MF_01578">
    <property type="entry name" value="Shikimate_DH_YdiB"/>
    <property type="match status" value="1"/>
</dbReference>
<dbReference type="InterPro" id="IPR046346">
    <property type="entry name" value="Aminoacid_DH-like_N_sf"/>
</dbReference>
<dbReference type="InterPro" id="IPR036291">
    <property type="entry name" value="NAD(P)-bd_dom_sf"/>
</dbReference>
<dbReference type="InterPro" id="IPR022872">
    <property type="entry name" value="Quinate/Shikimate_DH"/>
</dbReference>
<dbReference type="InterPro" id="IPR041121">
    <property type="entry name" value="SDH_C"/>
</dbReference>
<dbReference type="InterPro" id="IPR013708">
    <property type="entry name" value="Shikimate_DH-bd_N"/>
</dbReference>
<dbReference type="InterPro" id="IPR022893">
    <property type="entry name" value="Shikimate_DH_fam"/>
</dbReference>
<dbReference type="NCBIfam" id="NF009390">
    <property type="entry name" value="PRK12749.1"/>
    <property type="match status" value="1"/>
</dbReference>
<dbReference type="PANTHER" id="PTHR21089:SF1">
    <property type="entry name" value="BIFUNCTIONAL 3-DEHYDROQUINATE DEHYDRATASE_SHIKIMATE DEHYDROGENASE, CHLOROPLASTIC"/>
    <property type="match status" value="1"/>
</dbReference>
<dbReference type="PANTHER" id="PTHR21089">
    <property type="entry name" value="SHIKIMATE DEHYDROGENASE"/>
    <property type="match status" value="1"/>
</dbReference>
<dbReference type="Pfam" id="PF18317">
    <property type="entry name" value="SDH_C"/>
    <property type="match status" value="1"/>
</dbReference>
<dbReference type="Pfam" id="PF08501">
    <property type="entry name" value="Shikimate_dh_N"/>
    <property type="match status" value="1"/>
</dbReference>
<dbReference type="SUPFAM" id="SSF53223">
    <property type="entry name" value="Aminoacid dehydrogenase-like, N-terminal domain"/>
    <property type="match status" value="1"/>
</dbReference>
<dbReference type="SUPFAM" id="SSF51735">
    <property type="entry name" value="NAD(P)-binding Rossmann-fold domains"/>
    <property type="match status" value="1"/>
</dbReference>
<gene>
    <name evidence="1" type="primary">ydiB</name>
    <name type="ordered locus">SFV_1718</name>
</gene>
<comment type="function">
    <text evidence="1">The actual biological function of YdiB remains unclear, nor is it known whether 3-dehydroshikimate or quinate represents the natural substrate. Catalyzes the reversible NAD-dependent reduction of both 3-dehydroshikimate (DHSA) and 3-dehydroquinate to yield shikimate (SA) and quinate, respectively. It can use both NAD or NADP for catalysis, however it has higher catalytic efficiency with NAD.</text>
</comment>
<comment type="catalytic activity">
    <reaction evidence="1">
        <text>L-quinate + NAD(+) = 3-dehydroquinate + NADH + H(+)</text>
        <dbReference type="Rhea" id="RHEA:22364"/>
        <dbReference type="ChEBI" id="CHEBI:15378"/>
        <dbReference type="ChEBI" id="CHEBI:29751"/>
        <dbReference type="ChEBI" id="CHEBI:32364"/>
        <dbReference type="ChEBI" id="CHEBI:57540"/>
        <dbReference type="ChEBI" id="CHEBI:57945"/>
        <dbReference type="EC" id="1.1.1.282"/>
    </reaction>
</comment>
<comment type="catalytic activity">
    <reaction evidence="1">
        <text>L-quinate + NADP(+) = 3-dehydroquinate + NADPH + H(+)</text>
        <dbReference type="Rhea" id="RHEA:18425"/>
        <dbReference type="ChEBI" id="CHEBI:15378"/>
        <dbReference type="ChEBI" id="CHEBI:29751"/>
        <dbReference type="ChEBI" id="CHEBI:32364"/>
        <dbReference type="ChEBI" id="CHEBI:57783"/>
        <dbReference type="ChEBI" id="CHEBI:58349"/>
        <dbReference type="EC" id="1.1.1.282"/>
    </reaction>
</comment>
<comment type="catalytic activity">
    <reaction evidence="1">
        <text>shikimate + NADP(+) = 3-dehydroshikimate + NADPH + H(+)</text>
        <dbReference type="Rhea" id="RHEA:17737"/>
        <dbReference type="ChEBI" id="CHEBI:15378"/>
        <dbReference type="ChEBI" id="CHEBI:16630"/>
        <dbReference type="ChEBI" id="CHEBI:36208"/>
        <dbReference type="ChEBI" id="CHEBI:57783"/>
        <dbReference type="ChEBI" id="CHEBI:58349"/>
        <dbReference type="EC" id="1.1.1.282"/>
    </reaction>
</comment>
<comment type="catalytic activity">
    <reaction evidence="1">
        <text>shikimate + NAD(+) = 3-dehydroshikimate + NADH + H(+)</text>
        <dbReference type="Rhea" id="RHEA:17741"/>
        <dbReference type="ChEBI" id="CHEBI:15378"/>
        <dbReference type="ChEBI" id="CHEBI:16630"/>
        <dbReference type="ChEBI" id="CHEBI:36208"/>
        <dbReference type="ChEBI" id="CHEBI:57540"/>
        <dbReference type="ChEBI" id="CHEBI:57945"/>
        <dbReference type="EC" id="1.1.1.282"/>
    </reaction>
</comment>
<comment type="pathway">
    <text evidence="1">Metabolic intermediate biosynthesis; chorismate biosynthesis; chorismate from D-erythrose 4-phosphate and phosphoenolpyruvate: step 4/7.</text>
</comment>
<comment type="subunit">
    <text evidence="1">Homodimer.</text>
</comment>
<comment type="similarity">
    <text evidence="1">Belongs to the shikimate dehydrogenase family.</text>
</comment>
<proteinExistence type="inferred from homology"/>
<feature type="chain" id="PRO_0000280778" description="Quinate/shikimate dehydrogenase">
    <location>
        <begin position="1"/>
        <end position="249"/>
    </location>
</feature>
<feature type="binding site" evidence="1">
    <location>
        <position position="32"/>
    </location>
    <ligand>
        <name>substrate</name>
    </ligand>
</feature>
<feature type="binding site" evidence="1">
    <location>
        <position position="68"/>
    </location>
    <ligand>
        <name>substrate</name>
    </ligand>
</feature>
<feature type="binding site" evidence="1">
    <location>
        <begin position="93"/>
        <end position="96"/>
    </location>
    <ligand>
        <name>NAD(+)</name>
        <dbReference type="ChEBI" id="CHEBI:57540"/>
    </ligand>
</feature>
<feature type="binding site" evidence="1">
    <location>
        <begin position="116"/>
        <end position="119"/>
    </location>
    <ligand>
        <name>NAD(+)</name>
        <dbReference type="ChEBI" id="CHEBI:57540"/>
    </ligand>
</feature>
<feature type="binding site" evidence="1">
    <location>
        <position position="166"/>
    </location>
    <ligand>
        <name>NAD(+)</name>
        <dbReference type="ChEBI" id="CHEBI:57540"/>
    </ligand>
</feature>
<feature type="binding site" evidence="1">
    <location>
        <begin position="193"/>
        <end position="196"/>
    </location>
    <ligand>
        <name>NAD(+)</name>
        <dbReference type="ChEBI" id="CHEBI:57540"/>
    </ligand>
</feature>
<feature type="binding site" evidence="1">
    <location>
        <position position="216"/>
    </location>
    <ligand>
        <name>NAD(+)</name>
        <dbReference type="ChEBI" id="CHEBI:57540"/>
    </ligand>
</feature>
<evidence type="ECO:0000255" key="1">
    <source>
        <dbReference type="HAMAP-Rule" id="MF_01578"/>
    </source>
</evidence>
<name>YDIB_SHIF8</name>
<sequence>MAFEVDNDSFPGAIEGLKALKMRGTGVSMPNKQLACEYVDELTPAAKLVGAINTIVNDDGYLRGYNTDGTGHIRAIKESGFDIKGKTMVLLGAGGASTAIGAQGAIEGLKEIKLFNRRDEFFDKALAFAQRVNENTDCVVTDTDLADQQAFAEALASADILTNGTKVGMKPLENESLVNDISLLHPGLLVTECVYNPHMTKLLQQAQQAGCKTIDGYGMLLWQGAEQFTLWTGKDFPLEYVKQVMGFGA</sequence>
<keyword id="KW-0028">Amino-acid biosynthesis</keyword>
<keyword id="KW-0057">Aromatic amino acid biosynthesis</keyword>
<keyword id="KW-0520">NAD</keyword>
<keyword id="KW-0521">NADP</keyword>
<keyword id="KW-0560">Oxidoreductase</keyword>
<organism>
    <name type="scientific">Shigella flexneri serotype 5b (strain 8401)</name>
    <dbReference type="NCBI Taxonomy" id="373384"/>
    <lineage>
        <taxon>Bacteria</taxon>
        <taxon>Pseudomonadati</taxon>
        <taxon>Pseudomonadota</taxon>
        <taxon>Gammaproteobacteria</taxon>
        <taxon>Enterobacterales</taxon>
        <taxon>Enterobacteriaceae</taxon>
        <taxon>Shigella</taxon>
    </lineage>
</organism>
<protein>
    <recommendedName>
        <fullName evidence="1">Quinate/shikimate dehydrogenase</fullName>
        <ecNumber evidence="1">1.1.1.282</ecNumber>
    </recommendedName>
    <alternativeName>
        <fullName evidence="1">NAD-dependent shikimate 5-dehydrogenase</fullName>
    </alternativeName>
</protein>
<accession>Q0T479</accession>